<keyword id="KW-0067">ATP-binding</keyword>
<keyword id="KW-0997">Cell inner membrane</keyword>
<keyword id="KW-1003">Cell membrane</keyword>
<keyword id="KW-0418">Kinase</keyword>
<keyword id="KW-0472">Membrane</keyword>
<keyword id="KW-0547">Nucleotide-binding</keyword>
<keyword id="KW-0808">Transferase</keyword>
<keyword id="KW-0812">Transmembrane</keyword>
<keyword id="KW-1133">Transmembrane helix</keyword>
<keyword id="KW-0831">Ubiquinone biosynthesis</keyword>
<reference key="1">
    <citation type="submission" date="2007-04" db="EMBL/GenBank/DDBJ databases">
        <title>Complete sequence of Pseudomonas mendocina ymp.</title>
        <authorList>
            <consortium name="US DOE Joint Genome Institute"/>
            <person name="Copeland A."/>
            <person name="Lucas S."/>
            <person name="Lapidus A."/>
            <person name="Barry K."/>
            <person name="Glavina del Rio T."/>
            <person name="Dalin E."/>
            <person name="Tice H."/>
            <person name="Pitluck S."/>
            <person name="Kiss H."/>
            <person name="Brettin T."/>
            <person name="Detter J.C."/>
            <person name="Bruce D."/>
            <person name="Han C."/>
            <person name="Schmutz J."/>
            <person name="Larimer F."/>
            <person name="Land M."/>
            <person name="Hauser L."/>
            <person name="Kyrpides N."/>
            <person name="Mikhailova N."/>
            <person name="Hersman L."/>
            <person name="Dubois J."/>
            <person name="Maurice P."/>
            <person name="Richardson P."/>
        </authorList>
    </citation>
    <scope>NUCLEOTIDE SEQUENCE [LARGE SCALE GENOMIC DNA]</scope>
    <source>
        <strain>ymp</strain>
    </source>
</reference>
<accession>A4XPM5</accession>
<gene>
    <name evidence="1" type="primary">ubiB</name>
    <name type="ordered locus">Pmen_0521</name>
</gene>
<sequence length="527" mass="60521">MKLLAVRRLLRIQRVVIRYQLDELLLELPLPFWLRALSWLLPWRWLPRRPLALSRGARLRLALEDLGPIFIKFGQLLSTRRDLLPPDIADELARLQDQVPPFPEDQAIALIERQLGAPVSQLFARFDSQPLASASVAQVHAAQLKSGEEVVVKVVRPGLKPVIRQDLAWLFLLARIAERASADARRLRPVEVVSDYEKTIFDELDLLREAANASQLRRNFEGSPLLYVPQVYWDLCRHQVLVMERIYGVPVTDLATLADQRTDMKLLAERGVEIFFTQVFRDSFFHADMHPGNIFVSTRTPWSPQYIAIDCGIIGSLTDEDQDYLARNLIAFFKRDYRKVAQLHIDSGWVPADTKVNEFEAAIRTVCEPIFEKPLKDISFGQLLLRLFQTARRFNMEVQPQLVLLQKTLLNIEGLGRQLYPDLDLWSTAQPFLERWMRERVSPLHLLRNLQQQAEQVPHLSQIARDALERLQRPEPPRESDARDQWPLRLLGAALIAAGAVQGLAPLLATWPAWLMVGGGLYLVLRR</sequence>
<evidence type="ECO:0000255" key="1">
    <source>
        <dbReference type="HAMAP-Rule" id="MF_00414"/>
    </source>
</evidence>
<comment type="function">
    <text evidence="1">Is probably a protein kinase regulator of UbiI activity which is involved in aerobic coenzyme Q (ubiquinone) biosynthesis.</text>
</comment>
<comment type="pathway">
    <text>Cofactor biosynthesis; ubiquinone biosynthesis [regulation].</text>
</comment>
<comment type="subcellular location">
    <subcellularLocation>
        <location evidence="1">Cell inner membrane</location>
        <topology evidence="1">Multi-pass membrane protein</topology>
    </subcellularLocation>
</comment>
<comment type="similarity">
    <text evidence="1">Belongs to the ABC1 family. UbiB subfamily.</text>
</comment>
<dbReference type="EC" id="2.7.-.-" evidence="1"/>
<dbReference type="EMBL" id="CP000680">
    <property type="protein sequence ID" value="ABP83291.1"/>
    <property type="molecule type" value="Genomic_DNA"/>
</dbReference>
<dbReference type="SMR" id="A4XPM5"/>
<dbReference type="STRING" id="399739.Pmen_0521"/>
<dbReference type="KEGG" id="pmy:Pmen_0521"/>
<dbReference type="PATRIC" id="fig|399739.8.peg.529"/>
<dbReference type="eggNOG" id="COG0661">
    <property type="taxonomic scope" value="Bacteria"/>
</dbReference>
<dbReference type="HOGENOM" id="CLU_006533_0_0_6"/>
<dbReference type="OrthoDB" id="9795390at2"/>
<dbReference type="UniPathway" id="UPA00232"/>
<dbReference type="GO" id="GO:0005886">
    <property type="term" value="C:plasma membrane"/>
    <property type="evidence" value="ECO:0007669"/>
    <property type="project" value="UniProtKB-SubCell"/>
</dbReference>
<dbReference type="GO" id="GO:0005524">
    <property type="term" value="F:ATP binding"/>
    <property type="evidence" value="ECO:0007669"/>
    <property type="project" value="UniProtKB-KW"/>
</dbReference>
<dbReference type="GO" id="GO:0004672">
    <property type="term" value="F:protein kinase activity"/>
    <property type="evidence" value="ECO:0007669"/>
    <property type="project" value="UniProtKB-UniRule"/>
</dbReference>
<dbReference type="GO" id="GO:0010795">
    <property type="term" value="P:regulation of ubiquinone biosynthetic process"/>
    <property type="evidence" value="ECO:0007669"/>
    <property type="project" value="UniProtKB-UniRule"/>
</dbReference>
<dbReference type="GO" id="GO:0006744">
    <property type="term" value="P:ubiquinone biosynthetic process"/>
    <property type="evidence" value="ECO:0007669"/>
    <property type="project" value="UniProtKB-UniPathway"/>
</dbReference>
<dbReference type="CDD" id="cd13972">
    <property type="entry name" value="UbiB"/>
    <property type="match status" value="1"/>
</dbReference>
<dbReference type="HAMAP" id="MF_00414">
    <property type="entry name" value="UbiB"/>
    <property type="match status" value="1"/>
</dbReference>
<dbReference type="InterPro" id="IPR004147">
    <property type="entry name" value="ABC1_dom"/>
</dbReference>
<dbReference type="InterPro" id="IPR011009">
    <property type="entry name" value="Kinase-like_dom_sf"/>
</dbReference>
<dbReference type="InterPro" id="IPR010232">
    <property type="entry name" value="UbiB"/>
</dbReference>
<dbReference type="InterPro" id="IPR045308">
    <property type="entry name" value="UbiB_bact"/>
</dbReference>
<dbReference type="InterPro" id="IPR050154">
    <property type="entry name" value="UbiB_kinase"/>
</dbReference>
<dbReference type="NCBIfam" id="NF003404">
    <property type="entry name" value="PRK04750.1"/>
    <property type="match status" value="1"/>
</dbReference>
<dbReference type="NCBIfam" id="TIGR01982">
    <property type="entry name" value="UbiB"/>
    <property type="match status" value="1"/>
</dbReference>
<dbReference type="PANTHER" id="PTHR10566">
    <property type="entry name" value="CHAPERONE-ACTIVITY OF BC1 COMPLEX CABC1 -RELATED"/>
    <property type="match status" value="1"/>
</dbReference>
<dbReference type="PANTHER" id="PTHR10566:SF113">
    <property type="entry name" value="PROTEIN ACTIVITY OF BC1 COMPLEX KINASE 7, CHLOROPLASTIC"/>
    <property type="match status" value="1"/>
</dbReference>
<dbReference type="Pfam" id="PF03109">
    <property type="entry name" value="ABC1"/>
    <property type="match status" value="1"/>
</dbReference>
<dbReference type="SUPFAM" id="SSF56112">
    <property type="entry name" value="Protein kinase-like (PK-like)"/>
    <property type="match status" value="1"/>
</dbReference>
<protein>
    <recommendedName>
        <fullName evidence="1">Probable protein kinase UbiB</fullName>
        <ecNumber evidence="1">2.7.-.-</ecNumber>
    </recommendedName>
    <alternativeName>
        <fullName evidence="1">Ubiquinone biosynthesis protein UbiB</fullName>
    </alternativeName>
</protein>
<organism>
    <name type="scientific">Ectopseudomonas mendocina (strain ymp)</name>
    <name type="common">Pseudomonas mendocina</name>
    <dbReference type="NCBI Taxonomy" id="399739"/>
    <lineage>
        <taxon>Bacteria</taxon>
        <taxon>Pseudomonadati</taxon>
        <taxon>Pseudomonadota</taxon>
        <taxon>Gammaproteobacteria</taxon>
        <taxon>Pseudomonadales</taxon>
        <taxon>Pseudomonadaceae</taxon>
        <taxon>Ectopseudomonas</taxon>
    </lineage>
</organism>
<name>UBIB_ECTM1</name>
<feature type="chain" id="PRO_1000060068" description="Probable protein kinase UbiB">
    <location>
        <begin position="1"/>
        <end position="527"/>
    </location>
</feature>
<feature type="transmembrane region" description="Helical" evidence="1">
    <location>
        <begin position="23"/>
        <end position="43"/>
    </location>
</feature>
<feature type="transmembrane region" description="Helical" evidence="1">
    <location>
        <begin position="504"/>
        <end position="524"/>
    </location>
</feature>
<feature type="domain" description="Protein kinase" evidence="1">
    <location>
        <begin position="125"/>
        <end position="488"/>
    </location>
</feature>
<feature type="active site" description="Proton acceptor" evidence="1">
    <location>
        <position position="288"/>
    </location>
</feature>
<feature type="binding site" evidence="1">
    <location>
        <begin position="131"/>
        <end position="139"/>
    </location>
    <ligand>
        <name>ATP</name>
        <dbReference type="ChEBI" id="CHEBI:30616"/>
    </ligand>
</feature>
<feature type="binding site" evidence="1">
    <location>
        <position position="153"/>
    </location>
    <ligand>
        <name>ATP</name>
        <dbReference type="ChEBI" id="CHEBI:30616"/>
    </ligand>
</feature>
<proteinExistence type="inferred from homology"/>